<accession>B6EPT8</accession>
<name>RS14_ALISL</name>
<dbReference type="EMBL" id="FM178379">
    <property type="protein sequence ID" value="CAQ78018.1"/>
    <property type="molecule type" value="Genomic_DNA"/>
</dbReference>
<dbReference type="RefSeq" id="WP_012549162.1">
    <property type="nucleotide sequence ID" value="NC_011312.1"/>
</dbReference>
<dbReference type="SMR" id="B6EPT8"/>
<dbReference type="KEGG" id="vsa:VSAL_I0333"/>
<dbReference type="eggNOG" id="COG0199">
    <property type="taxonomic scope" value="Bacteria"/>
</dbReference>
<dbReference type="HOGENOM" id="CLU_139869_0_1_6"/>
<dbReference type="Proteomes" id="UP000001730">
    <property type="component" value="Chromosome 1"/>
</dbReference>
<dbReference type="GO" id="GO:0005737">
    <property type="term" value="C:cytoplasm"/>
    <property type="evidence" value="ECO:0007669"/>
    <property type="project" value="UniProtKB-ARBA"/>
</dbReference>
<dbReference type="GO" id="GO:0015935">
    <property type="term" value="C:small ribosomal subunit"/>
    <property type="evidence" value="ECO:0007669"/>
    <property type="project" value="TreeGrafter"/>
</dbReference>
<dbReference type="GO" id="GO:0019843">
    <property type="term" value="F:rRNA binding"/>
    <property type="evidence" value="ECO:0007669"/>
    <property type="project" value="UniProtKB-UniRule"/>
</dbReference>
<dbReference type="GO" id="GO:0003735">
    <property type="term" value="F:structural constituent of ribosome"/>
    <property type="evidence" value="ECO:0007669"/>
    <property type="project" value="InterPro"/>
</dbReference>
<dbReference type="GO" id="GO:0006412">
    <property type="term" value="P:translation"/>
    <property type="evidence" value="ECO:0007669"/>
    <property type="project" value="UniProtKB-UniRule"/>
</dbReference>
<dbReference type="FunFam" id="1.10.287.1480:FF:000001">
    <property type="entry name" value="30S ribosomal protein S14"/>
    <property type="match status" value="1"/>
</dbReference>
<dbReference type="Gene3D" id="1.10.287.1480">
    <property type="match status" value="1"/>
</dbReference>
<dbReference type="HAMAP" id="MF_00537">
    <property type="entry name" value="Ribosomal_uS14_1"/>
    <property type="match status" value="1"/>
</dbReference>
<dbReference type="InterPro" id="IPR001209">
    <property type="entry name" value="Ribosomal_uS14"/>
</dbReference>
<dbReference type="InterPro" id="IPR023036">
    <property type="entry name" value="Ribosomal_uS14_bac/plastid"/>
</dbReference>
<dbReference type="InterPro" id="IPR018271">
    <property type="entry name" value="Ribosomal_uS14_CS"/>
</dbReference>
<dbReference type="NCBIfam" id="NF006477">
    <property type="entry name" value="PRK08881.1"/>
    <property type="match status" value="1"/>
</dbReference>
<dbReference type="PANTHER" id="PTHR19836">
    <property type="entry name" value="30S RIBOSOMAL PROTEIN S14"/>
    <property type="match status" value="1"/>
</dbReference>
<dbReference type="PANTHER" id="PTHR19836:SF19">
    <property type="entry name" value="SMALL RIBOSOMAL SUBUNIT PROTEIN US14M"/>
    <property type="match status" value="1"/>
</dbReference>
<dbReference type="Pfam" id="PF00253">
    <property type="entry name" value="Ribosomal_S14"/>
    <property type="match status" value="1"/>
</dbReference>
<dbReference type="SUPFAM" id="SSF57716">
    <property type="entry name" value="Glucocorticoid receptor-like (DNA-binding domain)"/>
    <property type="match status" value="1"/>
</dbReference>
<dbReference type="PROSITE" id="PS00527">
    <property type="entry name" value="RIBOSOMAL_S14"/>
    <property type="match status" value="1"/>
</dbReference>
<proteinExistence type="inferred from homology"/>
<sequence>MAKQSMKAREAKRAKLVTKFAEKRAALKVLISDVNASEEDRWNAVLKLQSLPRDSSASRQRNRCNQTGRPHGYLRKFGLSRIKVREACMKGEIPGLRKASW</sequence>
<gene>
    <name evidence="1" type="primary">rpsN</name>
    <name type="ordered locus">VSAL_I0333</name>
</gene>
<reference key="1">
    <citation type="journal article" date="2008" name="BMC Genomics">
        <title>The genome sequence of the fish pathogen Aliivibrio salmonicida strain LFI1238 shows extensive evidence of gene decay.</title>
        <authorList>
            <person name="Hjerde E."/>
            <person name="Lorentzen M.S."/>
            <person name="Holden M.T."/>
            <person name="Seeger K."/>
            <person name="Paulsen S."/>
            <person name="Bason N."/>
            <person name="Churcher C."/>
            <person name="Harris D."/>
            <person name="Norbertczak H."/>
            <person name="Quail M.A."/>
            <person name="Sanders S."/>
            <person name="Thurston S."/>
            <person name="Parkhill J."/>
            <person name="Willassen N.P."/>
            <person name="Thomson N.R."/>
        </authorList>
    </citation>
    <scope>NUCLEOTIDE SEQUENCE [LARGE SCALE GENOMIC DNA]</scope>
    <source>
        <strain>LFI1238</strain>
    </source>
</reference>
<comment type="function">
    <text evidence="1">Binds 16S rRNA, required for the assembly of 30S particles and may also be responsible for determining the conformation of the 16S rRNA at the A site.</text>
</comment>
<comment type="subunit">
    <text evidence="1">Part of the 30S ribosomal subunit. Contacts proteins S3 and S10.</text>
</comment>
<comment type="similarity">
    <text evidence="1">Belongs to the universal ribosomal protein uS14 family.</text>
</comment>
<feature type="chain" id="PRO_1000128291" description="Small ribosomal subunit protein uS14">
    <location>
        <begin position="1"/>
        <end position="101"/>
    </location>
</feature>
<keyword id="KW-0687">Ribonucleoprotein</keyword>
<keyword id="KW-0689">Ribosomal protein</keyword>
<keyword id="KW-0694">RNA-binding</keyword>
<keyword id="KW-0699">rRNA-binding</keyword>
<organism>
    <name type="scientific">Aliivibrio salmonicida (strain LFI1238)</name>
    <name type="common">Vibrio salmonicida (strain LFI1238)</name>
    <dbReference type="NCBI Taxonomy" id="316275"/>
    <lineage>
        <taxon>Bacteria</taxon>
        <taxon>Pseudomonadati</taxon>
        <taxon>Pseudomonadota</taxon>
        <taxon>Gammaproteobacteria</taxon>
        <taxon>Vibrionales</taxon>
        <taxon>Vibrionaceae</taxon>
        <taxon>Aliivibrio</taxon>
    </lineage>
</organism>
<evidence type="ECO:0000255" key="1">
    <source>
        <dbReference type="HAMAP-Rule" id="MF_00537"/>
    </source>
</evidence>
<evidence type="ECO:0000305" key="2"/>
<protein>
    <recommendedName>
        <fullName evidence="1">Small ribosomal subunit protein uS14</fullName>
    </recommendedName>
    <alternativeName>
        <fullName evidence="2">30S ribosomal protein S14</fullName>
    </alternativeName>
</protein>